<name>PYRF_BACCN</name>
<feature type="chain" id="PRO_1000085484" description="Orotidine 5'-phosphate decarboxylase">
    <location>
        <begin position="1"/>
        <end position="238"/>
    </location>
</feature>
<feature type="active site" description="Proton donor" evidence="1">
    <location>
        <position position="61"/>
    </location>
</feature>
<feature type="binding site" evidence="1">
    <location>
        <position position="10"/>
    </location>
    <ligand>
        <name>substrate</name>
    </ligand>
</feature>
<feature type="binding site" evidence="1">
    <location>
        <position position="32"/>
    </location>
    <ligand>
        <name>substrate</name>
    </ligand>
</feature>
<feature type="binding site" evidence="1">
    <location>
        <begin position="59"/>
        <end position="68"/>
    </location>
    <ligand>
        <name>substrate</name>
    </ligand>
</feature>
<feature type="binding site" evidence="1">
    <location>
        <position position="122"/>
    </location>
    <ligand>
        <name>substrate</name>
    </ligand>
</feature>
<feature type="binding site" evidence="1">
    <location>
        <position position="184"/>
    </location>
    <ligand>
        <name>substrate</name>
    </ligand>
</feature>
<feature type="binding site" evidence="1">
    <location>
        <position position="193"/>
    </location>
    <ligand>
        <name>substrate</name>
    </ligand>
</feature>
<feature type="binding site" evidence="1">
    <location>
        <position position="213"/>
    </location>
    <ligand>
        <name>substrate</name>
    </ligand>
</feature>
<feature type="binding site" evidence="1">
    <location>
        <position position="214"/>
    </location>
    <ligand>
        <name>substrate</name>
    </ligand>
</feature>
<keyword id="KW-0210">Decarboxylase</keyword>
<keyword id="KW-0456">Lyase</keyword>
<keyword id="KW-0665">Pyrimidine biosynthesis</keyword>
<proteinExistence type="inferred from homology"/>
<comment type="function">
    <text evidence="1">Catalyzes the decarboxylation of orotidine 5'-monophosphate (OMP) to uridine 5'-monophosphate (UMP).</text>
</comment>
<comment type="catalytic activity">
    <reaction evidence="1">
        <text>orotidine 5'-phosphate + H(+) = UMP + CO2</text>
        <dbReference type="Rhea" id="RHEA:11596"/>
        <dbReference type="ChEBI" id="CHEBI:15378"/>
        <dbReference type="ChEBI" id="CHEBI:16526"/>
        <dbReference type="ChEBI" id="CHEBI:57538"/>
        <dbReference type="ChEBI" id="CHEBI:57865"/>
        <dbReference type="EC" id="4.1.1.23"/>
    </reaction>
</comment>
<comment type="pathway">
    <text evidence="1">Pyrimidine metabolism; UMP biosynthesis via de novo pathway; UMP from orotate: step 2/2.</text>
</comment>
<comment type="subunit">
    <text evidence="1">Homodimer.</text>
</comment>
<comment type="similarity">
    <text evidence="1">Belongs to the OMP decarboxylase family. Type 1 subfamily.</text>
</comment>
<protein>
    <recommendedName>
        <fullName evidence="1">Orotidine 5'-phosphate decarboxylase</fullName>
        <ecNumber evidence="1">4.1.1.23</ecNumber>
    </recommendedName>
    <alternativeName>
        <fullName evidence="1">OMP decarboxylase</fullName>
        <shortName evidence="1">OMPDCase</shortName>
        <shortName evidence="1">OMPdecase</shortName>
    </alternativeName>
</protein>
<reference key="1">
    <citation type="journal article" date="2008" name="Chem. Biol. Interact.">
        <title>Extending the Bacillus cereus group genomics to putative food-borne pathogens of different toxicity.</title>
        <authorList>
            <person name="Lapidus A."/>
            <person name="Goltsman E."/>
            <person name="Auger S."/>
            <person name="Galleron N."/>
            <person name="Segurens B."/>
            <person name="Dossat C."/>
            <person name="Land M.L."/>
            <person name="Broussolle V."/>
            <person name="Brillard J."/>
            <person name="Guinebretiere M.-H."/>
            <person name="Sanchis V."/>
            <person name="Nguen-the C."/>
            <person name="Lereclus D."/>
            <person name="Richardson P."/>
            <person name="Wincker P."/>
            <person name="Weissenbach J."/>
            <person name="Ehrlich S.D."/>
            <person name="Sorokin A."/>
        </authorList>
    </citation>
    <scope>NUCLEOTIDE SEQUENCE [LARGE SCALE GENOMIC DNA]</scope>
    <source>
        <strain>DSM 22905 / CIP 110041 / 391-98 / NVH 391-98</strain>
    </source>
</reference>
<dbReference type="EC" id="4.1.1.23" evidence="1"/>
<dbReference type="EMBL" id="CP000764">
    <property type="protein sequence ID" value="ABS22766.1"/>
    <property type="molecule type" value="Genomic_DNA"/>
</dbReference>
<dbReference type="RefSeq" id="WP_012094973.1">
    <property type="nucleotide sequence ID" value="NC_009674.1"/>
</dbReference>
<dbReference type="SMR" id="A7GRK8"/>
<dbReference type="STRING" id="315749.Bcer98_2532"/>
<dbReference type="GeneID" id="33897786"/>
<dbReference type="KEGG" id="bcy:Bcer98_2532"/>
<dbReference type="eggNOG" id="COG0284">
    <property type="taxonomic scope" value="Bacteria"/>
</dbReference>
<dbReference type="HOGENOM" id="CLU_067069_1_1_9"/>
<dbReference type="OrthoDB" id="9806203at2"/>
<dbReference type="UniPathway" id="UPA00070">
    <property type="reaction ID" value="UER00120"/>
</dbReference>
<dbReference type="Proteomes" id="UP000002300">
    <property type="component" value="Chromosome"/>
</dbReference>
<dbReference type="GO" id="GO:0005829">
    <property type="term" value="C:cytosol"/>
    <property type="evidence" value="ECO:0007669"/>
    <property type="project" value="TreeGrafter"/>
</dbReference>
<dbReference type="GO" id="GO:0004590">
    <property type="term" value="F:orotidine-5'-phosphate decarboxylase activity"/>
    <property type="evidence" value="ECO:0007669"/>
    <property type="project" value="UniProtKB-UniRule"/>
</dbReference>
<dbReference type="GO" id="GO:0006207">
    <property type="term" value="P:'de novo' pyrimidine nucleobase biosynthetic process"/>
    <property type="evidence" value="ECO:0007669"/>
    <property type="project" value="InterPro"/>
</dbReference>
<dbReference type="GO" id="GO:0044205">
    <property type="term" value="P:'de novo' UMP biosynthetic process"/>
    <property type="evidence" value="ECO:0007669"/>
    <property type="project" value="UniProtKB-UniRule"/>
</dbReference>
<dbReference type="CDD" id="cd04725">
    <property type="entry name" value="OMP_decarboxylase_like"/>
    <property type="match status" value="1"/>
</dbReference>
<dbReference type="FunFam" id="3.20.20.70:FF:000015">
    <property type="entry name" value="Orotidine 5'-phosphate decarboxylase"/>
    <property type="match status" value="1"/>
</dbReference>
<dbReference type="Gene3D" id="3.20.20.70">
    <property type="entry name" value="Aldolase class I"/>
    <property type="match status" value="1"/>
</dbReference>
<dbReference type="HAMAP" id="MF_01200_B">
    <property type="entry name" value="OMPdecase_type1_B"/>
    <property type="match status" value="1"/>
</dbReference>
<dbReference type="InterPro" id="IPR013785">
    <property type="entry name" value="Aldolase_TIM"/>
</dbReference>
<dbReference type="InterPro" id="IPR014732">
    <property type="entry name" value="OMPdecase"/>
</dbReference>
<dbReference type="InterPro" id="IPR018089">
    <property type="entry name" value="OMPdecase_AS"/>
</dbReference>
<dbReference type="InterPro" id="IPR047596">
    <property type="entry name" value="OMPdecase_bac"/>
</dbReference>
<dbReference type="InterPro" id="IPR001754">
    <property type="entry name" value="OMPdeCOase_dom"/>
</dbReference>
<dbReference type="InterPro" id="IPR011060">
    <property type="entry name" value="RibuloseP-bd_barrel"/>
</dbReference>
<dbReference type="NCBIfam" id="NF001273">
    <property type="entry name" value="PRK00230.1"/>
    <property type="match status" value="1"/>
</dbReference>
<dbReference type="NCBIfam" id="TIGR01740">
    <property type="entry name" value="pyrF"/>
    <property type="match status" value="1"/>
</dbReference>
<dbReference type="PANTHER" id="PTHR32119">
    <property type="entry name" value="OROTIDINE 5'-PHOSPHATE DECARBOXYLASE"/>
    <property type="match status" value="1"/>
</dbReference>
<dbReference type="PANTHER" id="PTHR32119:SF2">
    <property type="entry name" value="OROTIDINE 5'-PHOSPHATE DECARBOXYLASE"/>
    <property type="match status" value="1"/>
</dbReference>
<dbReference type="Pfam" id="PF00215">
    <property type="entry name" value="OMPdecase"/>
    <property type="match status" value="1"/>
</dbReference>
<dbReference type="SMART" id="SM00934">
    <property type="entry name" value="OMPdecase"/>
    <property type="match status" value="1"/>
</dbReference>
<dbReference type="SUPFAM" id="SSF51366">
    <property type="entry name" value="Ribulose-phoshate binding barrel"/>
    <property type="match status" value="1"/>
</dbReference>
<dbReference type="PROSITE" id="PS00156">
    <property type="entry name" value="OMPDECASE"/>
    <property type="match status" value="1"/>
</dbReference>
<evidence type="ECO:0000255" key="1">
    <source>
        <dbReference type="HAMAP-Rule" id="MF_01200"/>
    </source>
</evidence>
<organism>
    <name type="scientific">Bacillus cytotoxicus (strain DSM 22905 / CIP 110041 / 391-98 / NVH 391-98)</name>
    <dbReference type="NCBI Taxonomy" id="315749"/>
    <lineage>
        <taxon>Bacteria</taxon>
        <taxon>Bacillati</taxon>
        <taxon>Bacillota</taxon>
        <taxon>Bacilli</taxon>
        <taxon>Bacillales</taxon>
        <taxon>Bacillaceae</taxon>
        <taxon>Bacillus</taxon>
        <taxon>Bacillus cereus group</taxon>
    </lineage>
</organism>
<gene>
    <name evidence="1" type="primary">pyrF</name>
    <name type="ordered locus">Bcer98_2532</name>
</gene>
<sequence length="238" mass="26213">MSKSLIVALDFPGKKEVEQFLQHFEGEELFVKVGMELFYKEGPAIITYLKEKGHKIFLDLKLHDIPNTVKSAMRSLASLDVDMVNVHAAGGSSMMKAALEGLEEGKQEGKERPICIAVTQLTSTSEVMMKKEIGIEKTLEEAVAHYAKLTKESGLDGVVCSTLEVPKLREVCGDEFVTVTPGIRLASDDVNDQVRVATPKRARELGSSYIVVGRSITKAENPLEAYQTVKQQWEGVTV</sequence>
<accession>A7GRK8</accession>